<reference key="1">
    <citation type="journal article" date="2006" name="Science">
        <title>Genome of rice cluster I archaea -- the key methane producers in the rice rhizosphere.</title>
        <authorList>
            <person name="Erkel C."/>
            <person name="Kube M."/>
            <person name="Reinhardt R."/>
            <person name="Liesack W."/>
        </authorList>
    </citation>
    <scope>NUCLEOTIDE SEQUENCE [LARGE SCALE GENOMIC DNA]</scope>
    <source>
        <strain>DSM 22066 / NBRC 105507 / MRE50</strain>
    </source>
</reference>
<gene>
    <name evidence="1" type="primary">aroD</name>
    <name type="ordered locus">UNCMA_14530</name>
    <name type="ORF">RCIX1512</name>
</gene>
<organism>
    <name type="scientific">Methanocella arvoryzae (strain DSM 22066 / NBRC 105507 / MRE50)</name>
    <dbReference type="NCBI Taxonomy" id="351160"/>
    <lineage>
        <taxon>Archaea</taxon>
        <taxon>Methanobacteriati</taxon>
        <taxon>Methanobacteriota</taxon>
        <taxon>Stenosarchaea group</taxon>
        <taxon>Methanomicrobia</taxon>
        <taxon>Methanocellales</taxon>
        <taxon>Methanocellaceae</taxon>
        <taxon>Methanocella</taxon>
    </lineage>
</organism>
<dbReference type="EC" id="4.2.1.10" evidence="1"/>
<dbReference type="EMBL" id="AM114193">
    <property type="protein sequence ID" value="CAJ36775.1"/>
    <property type="molecule type" value="Genomic_DNA"/>
</dbReference>
<dbReference type="RefSeq" id="WP_012035781.1">
    <property type="nucleotide sequence ID" value="NC_009464.1"/>
</dbReference>
<dbReference type="SMR" id="Q0W4B8"/>
<dbReference type="STRING" id="351160.RCIX1512"/>
<dbReference type="GeneID" id="5142892"/>
<dbReference type="KEGG" id="rci:RCIX1512"/>
<dbReference type="PATRIC" id="fig|351160.9.peg.1501"/>
<dbReference type="eggNOG" id="arCOG02097">
    <property type="taxonomic scope" value="Archaea"/>
</dbReference>
<dbReference type="OrthoDB" id="34329at2157"/>
<dbReference type="UniPathway" id="UPA00053">
    <property type="reaction ID" value="UER00086"/>
</dbReference>
<dbReference type="Proteomes" id="UP000000663">
    <property type="component" value="Chromosome"/>
</dbReference>
<dbReference type="GO" id="GO:0003855">
    <property type="term" value="F:3-dehydroquinate dehydratase activity"/>
    <property type="evidence" value="ECO:0007669"/>
    <property type="project" value="UniProtKB-UniRule"/>
</dbReference>
<dbReference type="GO" id="GO:0046279">
    <property type="term" value="P:3,4-dihydroxybenzoate biosynthetic process"/>
    <property type="evidence" value="ECO:0007669"/>
    <property type="project" value="TreeGrafter"/>
</dbReference>
<dbReference type="GO" id="GO:0008652">
    <property type="term" value="P:amino acid biosynthetic process"/>
    <property type="evidence" value="ECO:0007669"/>
    <property type="project" value="UniProtKB-KW"/>
</dbReference>
<dbReference type="GO" id="GO:0009073">
    <property type="term" value="P:aromatic amino acid family biosynthetic process"/>
    <property type="evidence" value="ECO:0007669"/>
    <property type="project" value="UniProtKB-KW"/>
</dbReference>
<dbReference type="GO" id="GO:0009423">
    <property type="term" value="P:chorismate biosynthetic process"/>
    <property type="evidence" value="ECO:0007669"/>
    <property type="project" value="UniProtKB-UniRule"/>
</dbReference>
<dbReference type="CDD" id="cd00502">
    <property type="entry name" value="DHQase_I"/>
    <property type="match status" value="1"/>
</dbReference>
<dbReference type="Gene3D" id="3.20.20.70">
    <property type="entry name" value="Aldolase class I"/>
    <property type="match status" value="1"/>
</dbReference>
<dbReference type="HAMAP" id="MF_00214">
    <property type="entry name" value="AroD"/>
    <property type="match status" value="1"/>
</dbReference>
<dbReference type="InterPro" id="IPR013785">
    <property type="entry name" value="Aldolase_TIM"/>
</dbReference>
<dbReference type="InterPro" id="IPR001381">
    <property type="entry name" value="DHquinase_I"/>
</dbReference>
<dbReference type="InterPro" id="IPR050146">
    <property type="entry name" value="Type-I_3-dehydroquinase"/>
</dbReference>
<dbReference type="NCBIfam" id="TIGR01093">
    <property type="entry name" value="aroD"/>
    <property type="match status" value="1"/>
</dbReference>
<dbReference type="PANTHER" id="PTHR43699">
    <property type="entry name" value="3-DEHYDROQUINATE DEHYDRATASE"/>
    <property type="match status" value="1"/>
</dbReference>
<dbReference type="PANTHER" id="PTHR43699:SF1">
    <property type="entry name" value="3-DEHYDROQUINATE DEHYDRATASE"/>
    <property type="match status" value="1"/>
</dbReference>
<dbReference type="Pfam" id="PF01487">
    <property type="entry name" value="DHquinase_I"/>
    <property type="match status" value="1"/>
</dbReference>
<dbReference type="SUPFAM" id="SSF51569">
    <property type="entry name" value="Aldolase"/>
    <property type="match status" value="1"/>
</dbReference>
<comment type="function">
    <text evidence="1">Involved in the third step of the chorismate pathway, which leads to the biosynthesis of aromatic amino acids. Catalyzes the cis-dehydration of 3-dehydroquinate (DHQ) and introduces the first double bond of the aromatic ring to yield 3-dehydroshikimate.</text>
</comment>
<comment type="catalytic activity">
    <reaction evidence="1">
        <text>3-dehydroquinate = 3-dehydroshikimate + H2O</text>
        <dbReference type="Rhea" id="RHEA:21096"/>
        <dbReference type="ChEBI" id="CHEBI:15377"/>
        <dbReference type="ChEBI" id="CHEBI:16630"/>
        <dbReference type="ChEBI" id="CHEBI:32364"/>
        <dbReference type="EC" id="4.2.1.10"/>
    </reaction>
</comment>
<comment type="pathway">
    <text evidence="1">Metabolic intermediate biosynthesis; chorismate biosynthesis; chorismate from D-erythrose 4-phosphate and phosphoenolpyruvate: step 3/7.</text>
</comment>
<comment type="subunit">
    <text evidence="1">Homodimer.</text>
</comment>
<comment type="similarity">
    <text evidence="1">Belongs to the type-I 3-dehydroquinase family.</text>
</comment>
<keyword id="KW-0028">Amino-acid biosynthesis</keyword>
<keyword id="KW-0057">Aromatic amino acid biosynthesis</keyword>
<keyword id="KW-0456">Lyase</keyword>
<keyword id="KW-1185">Reference proteome</keyword>
<keyword id="KW-0704">Schiff base</keyword>
<feature type="chain" id="PRO_1000043208" description="3-dehydroquinate dehydratase">
    <location>
        <begin position="1"/>
        <end position="219"/>
    </location>
</feature>
<feature type="active site" description="Proton donor/acceptor" evidence="1">
    <location>
        <position position="116"/>
    </location>
</feature>
<feature type="active site" description="Schiff-base intermediate with substrate" evidence="1">
    <location>
        <position position="142"/>
    </location>
</feature>
<feature type="binding site" evidence="1">
    <location>
        <position position="10"/>
    </location>
    <ligand>
        <name>3-dehydroquinate</name>
        <dbReference type="ChEBI" id="CHEBI:32364"/>
    </ligand>
</feature>
<feature type="binding site" evidence="1">
    <location>
        <begin position="29"/>
        <end position="31"/>
    </location>
    <ligand>
        <name>3-dehydroquinate</name>
        <dbReference type="ChEBI" id="CHEBI:32364"/>
    </ligand>
</feature>
<feature type="binding site" evidence="1">
    <location>
        <position position="59"/>
    </location>
    <ligand>
        <name>3-dehydroquinate</name>
        <dbReference type="ChEBI" id="CHEBI:32364"/>
    </ligand>
</feature>
<feature type="binding site" evidence="1">
    <location>
        <position position="180"/>
    </location>
    <ligand>
        <name>3-dehydroquinate</name>
        <dbReference type="ChEBI" id="CHEBI:32364"/>
    </ligand>
</feature>
<feature type="binding site" evidence="1">
    <location>
        <position position="203"/>
    </location>
    <ligand>
        <name>3-dehydroquinate</name>
        <dbReference type="ChEBI" id="CHEBI:32364"/>
    </ligand>
</feature>
<accession>Q0W4B8</accession>
<proteinExistence type="inferred from homology"/>
<evidence type="ECO:0000255" key="1">
    <source>
        <dbReference type="HAMAP-Rule" id="MF_00214"/>
    </source>
</evidence>
<sequence length="219" mass="23952">MDFPPKVVASVTSKDDAKEAIALGADVVEVRVDLVGGDGPGLVESIYYDIGCPIIVTIRPKFEGGEFDGTDAERVQLFKKLTPYADFADFELRAKNLDELLTTITGTDAVPIVSYHDFDRTPSNEEMLSIINRSVEKGAIGKLAVMPKDMTDVLRLLEITLKSKRPVCTISMGSLGQHSRLVAPVYGSLLTYGYVRRPVAPGQIRVDQLLEGLRILGLR</sequence>
<protein>
    <recommendedName>
        <fullName evidence="1">3-dehydroquinate dehydratase</fullName>
        <shortName evidence="1">3-dehydroquinase</shortName>
        <ecNumber evidence="1">4.2.1.10</ecNumber>
    </recommendedName>
    <alternativeName>
        <fullName evidence="1">Type I DHQase</fullName>
    </alternativeName>
    <alternativeName>
        <fullName evidence="1">Type I dehydroquinase</fullName>
        <shortName evidence="1">DHQ1</shortName>
    </alternativeName>
</protein>
<name>AROD_METAR</name>